<proteinExistence type="inferred from homology"/>
<name>SEPF_RHOOB</name>
<keyword id="KW-0131">Cell cycle</keyword>
<keyword id="KW-0132">Cell division</keyword>
<keyword id="KW-0963">Cytoplasm</keyword>
<keyword id="KW-0717">Septation</keyword>
<organism>
    <name type="scientific">Rhodococcus opacus (strain B4)</name>
    <dbReference type="NCBI Taxonomy" id="632772"/>
    <lineage>
        <taxon>Bacteria</taxon>
        <taxon>Bacillati</taxon>
        <taxon>Actinomycetota</taxon>
        <taxon>Actinomycetes</taxon>
        <taxon>Mycobacteriales</taxon>
        <taxon>Nocardiaceae</taxon>
        <taxon>Rhodococcus</taxon>
    </lineage>
</organism>
<comment type="function">
    <text evidence="1">Cell division protein that is part of the divisome complex and is recruited early to the Z-ring. Probably stimulates Z-ring formation, perhaps through the cross-linking of FtsZ protofilaments. Its function overlaps with FtsA.</text>
</comment>
<comment type="subunit">
    <text evidence="1">Homodimer. Interacts with FtsZ.</text>
</comment>
<comment type="subcellular location">
    <subcellularLocation>
        <location evidence="1">Cytoplasm</location>
    </subcellularLocation>
    <text evidence="1">Localizes to the division site, in a FtsZ-dependent manner.</text>
</comment>
<comment type="similarity">
    <text evidence="1">Belongs to the SepF family.</text>
</comment>
<reference key="1">
    <citation type="submission" date="2009-03" db="EMBL/GenBank/DDBJ databases">
        <title>Comparison of the complete genome sequences of Rhodococcus erythropolis PR4 and Rhodococcus opacus B4.</title>
        <authorList>
            <person name="Takarada H."/>
            <person name="Sekine M."/>
            <person name="Hosoyama A."/>
            <person name="Yamada R."/>
            <person name="Fujisawa T."/>
            <person name="Omata S."/>
            <person name="Shimizu A."/>
            <person name="Tsukatani N."/>
            <person name="Tanikawa S."/>
            <person name="Fujita N."/>
            <person name="Harayama S."/>
        </authorList>
    </citation>
    <scope>NUCLEOTIDE SEQUENCE [LARGE SCALE GENOMIC DNA]</scope>
    <source>
        <strain>B4</strain>
    </source>
</reference>
<evidence type="ECO:0000255" key="1">
    <source>
        <dbReference type="HAMAP-Rule" id="MF_01197"/>
    </source>
</evidence>
<evidence type="ECO:0000256" key="2">
    <source>
        <dbReference type="SAM" id="MobiDB-lite"/>
    </source>
</evidence>
<sequence length="225" mass="25213">MSSLHKFKAYFGMVPLDDYEDEYLDEPEPTRRPARPARDSGRDPYHDRDDRDFAEPAFSKAAYAPGRRDDLDDDFDRYESPRHSSRVEPVAVRSARPSASGAVRGSTRGALAVDTRSDRVESRRGPLFDEGGPLSKITTLRPRDYGEARTIGERFRDGTPVIMDLVEMSNADAKRLVDFAAGLAFALRGSFDKVATKVFLLSPADIDVSAEERRRIAETGFYSQK</sequence>
<dbReference type="EMBL" id="AP011115">
    <property type="protein sequence ID" value="BAH49057.1"/>
    <property type="molecule type" value="Genomic_DNA"/>
</dbReference>
<dbReference type="RefSeq" id="WP_012688052.1">
    <property type="nucleotide sequence ID" value="NC_012522.1"/>
</dbReference>
<dbReference type="SMR" id="C1AU49"/>
<dbReference type="STRING" id="632772.ROP_08100"/>
<dbReference type="KEGG" id="rop:ROP_08100"/>
<dbReference type="PATRIC" id="fig|632772.20.peg.873"/>
<dbReference type="HOGENOM" id="CLU_078499_0_0_11"/>
<dbReference type="OrthoDB" id="3731101at2"/>
<dbReference type="Proteomes" id="UP000002212">
    <property type="component" value="Chromosome"/>
</dbReference>
<dbReference type="GO" id="GO:0005737">
    <property type="term" value="C:cytoplasm"/>
    <property type="evidence" value="ECO:0007669"/>
    <property type="project" value="UniProtKB-SubCell"/>
</dbReference>
<dbReference type="GO" id="GO:0000917">
    <property type="term" value="P:division septum assembly"/>
    <property type="evidence" value="ECO:0007669"/>
    <property type="project" value="UniProtKB-KW"/>
</dbReference>
<dbReference type="GO" id="GO:0043093">
    <property type="term" value="P:FtsZ-dependent cytokinesis"/>
    <property type="evidence" value="ECO:0007669"/>
    <property type="project" value="UniProtKB-UniRule"/>
</dbReference>
<dbReference type="FunFam" id="3.30.110.150:FF:000001">
    <property type="entry name" value="Cell division protein SepF"/>
    <property type="match status" value="1"/>
</dbReference>
<dbReference type="Gene3D" id="3.30.110.150">
    <property type="entry name" value="SepF-like protein"/>
    <property type="match status" value="1"/>
</dbReference>
<dbReference type="HAMAP" id="MF_01197">
    <property type="entry name" value="SepF"/>
    <property type="match status" value="1"/>
</dbReference>
<dbReference type="InterPro" id="IPR023052">
    <property type="entry name" value="Cell_div_SepF"/>
</dbReference>
<dbReference type="InterPro" id="IPR007561">
    <property type="entry name" value="Cell_div_SepF/SepF-rel"/>
</dbReference>
<dbReference type="InterPro" id="IPR038594">
    <property type="entry name" value="SepF-like_sf"/>
</dbReference>
<dbReference type="PANTHER" id="PTHR35798">
    <property type="entry name" value="CELL DIVISION PROTEIN SEPF"/>
    <property type="match status" value="1"/>
</dbReference>
<dbReference type="PANTHER" id="PTHR35798:SF1">
    <property type="entry name" value="CELL DIVISION PROTEIN SEPF"/>
    <property type="match status" value="1"/>
</dbReference>
<dbReference type="Pfam" id="PF04472">
    <property type="entry name" value="SepF"/>
    <property type="match status" value="1"/>
</dbReference>
<protein>
    <recommendedName>
        <fullName evidence="1">Cell division protein SepF</fullName>
    </recommendedName>
</protein>
<accession>C1AU49</accession>
<gene>
    <name evidence="1" type="primary">sepF</name>
    <name type="ordered locus">ROP_08100</name>
</gene>
<feature type="chain" id="PRO_1000164541" description="Cell division protein SepF">
    <location>
        <begin position="1"/>
        <end position="225"/>
    </location>
</feature>
<feature type="region of interest" description="Disordered" evidence="2">
    <location>
        <begin position="21"/>
        <end position="134"/>
    </location>
</feature>
<feature type="compositionally biased region" description="Basic and acidic residues" evidence="2">
    <location>
        <begin position="28"/>
        <end position="54"/>
    </location>
</feature>
<feature type="compositionally biased region" description="Basic and acidic residues" evidence="2">
    <location>
        <begin position="77"/>
        <end position="86"/>
    </location>
</feature>
<feature type="compositionally biased region" description="Basic and acidic residues" evidence="2">
    <location>
        <begin position="115"/>
        <end position="127"/>
    </location>
</feature>